<protein>
    <recommendedName>
        <fullName evidence="1">PF03932 family protein CutC</fullName>
    </recommendedName>
</protein>
<name>CUTC_KLEP7</name>
<accession>A6TB41</accession>
<sequence length="247" mass="26484">MAVLEVCCYSVACAREAERCGADRIELCAAPQEGGLTPSYGVLVSAREAITLPVHPIVRPRGGDFCYTEEEFAAMLNDIRMVRDLGFPGLVTGVLDADGQVDIPRMKKIMAAAGPLAVTFHRAFDLCADPRQAWKTLGTLGVKRILTSGQQSSAEKGISLITELIAAGDTPIIMAGAGVRAANLPLFLQAGVKEVHSSAGHWLPSEMRFRHPGVSMSADPDADEYRRYAVNGAAVAEMKRIISAWRS</sequence>
<gene>
    <name evidence="1" type="primary">cutC</name>
    <name type="ordered locus">KPN78578_23510</name>
    <name type="ORF">KPN_02386</name>
</gene>
<proteinExistence type="inferred from homology"/>
<feature type="chain" id="PRO_1000046938" description="PF03932 family protein CutC">
    <location>
        <begin position="1"/>
        <end position="247"/>
    </location>
</feature>
<organism>
    <name type="scientific">Klebsiella pneumoniae subsp. pneumoniae (strain ATCC 700721 / MGH 78578)</name>
    <dbReference type="NCBI Taxonomy" id="272620"/>
    <lineage>
        <taxon>Bacteria</taxon>
        <taxon>Pseudomonadati</taxon>
        <taxon>Pseudomonadota</taxon>
        <taxon>Gammaproteobacteria</taxon>
        <taxon>Enterobacterales</taxon>
        <taxon>Enterobacteriaceae</taxon>
        <taxon>Klebsiella/Raoultella group</taxon>
        <taxon>Klebsiella</taxon>
        <taxon>Klebsiella pneumoniae complex</taxon>
    </lineage>
</organism>
<keyword id="KW-0963">Cytoplasm</keyword>
<dbReference type="EMBL" id="CP000647">
    <property type="protein sequence ID" value="ABR77812.1"/>
    <property type="molecule type" value="Genomic_DNA"/>
</dbReference>
<dbReference type="RefSeq" id="WP_002911488.1">
    <property type="nucleotide sequence ID" value="NC_009648.1"/>
</dbReference>
<dbReference type="SMR" id="A6TB41"/>
<dbReference type="STRING" id="272620.KPN_02386"/>
<dbReference type="PaxDb" id="272620-KPN_02386"/>
<dbReference type="EnsemblBacteria" id="ABR77812">
    <property type="protein sequence ID" value="ABR77812"/>
    <property type="gene ID" value="KPN_02386"/>
</dbReference>
<dbReference type="KEGG" id="kpn:KPN_02386"/>
<dbReference type="HOGENOM" id="CLU_050555_3_1_6"/>
<dbReference type="Proteomes" id="UP000000265">
    <property type="component" value="Chromosome"/>
</dbReference>
<dbReference type="GO" id="GO:0005737">
    <property type="term" value="C:cytoplasm"/>
    <property type="evidence" value="ECO:0007669"/>
    <property type="project" value="UniProtKB-SubCell"/>
</dbReference>
<dbReference type="GO" id="GO:0005507">
    <property type="term" value="F:copper ion binding"/>
    <property type="evidence" value="ECO:0007669"/>
    <property type="project" value="TreeGrafter"/>
</dbReference>
<dbReference type="FunFam" id="3.20.20.380:FF:000001">
    <property type="entry name" value="Copper homeostasis protein CutC"/>
    <property type="match status" value="1"/>
</dbReference>
<dbReference type="Gene3D" id="3.20.20.380">
    <property type="entry name" value="Copper homeostasis (CutC) domain"/>
    <property type="match status" value="1"/>
</dbReference>
<dbReference type="HAMAP" id="MF_00795">
    <property type="entry name" value="CutC"/>
    <property type="match status" value="1"/>
</dbReference>
<dbReference type="InterPro" id="IPR005627">
    <property type="entry name" value="CutC-like"/>
</dbReference>
<dbReference type="InterPro" id="IPR036822">
    <property type="entry name" value="CutC-like_dom_sf"/>
</dbReference>
<dbReference type="NCBIfam" id="NF008603">
    <property type="entry name" value="PRK11572.1"/>
    <property type="match status" value="1"/>
</dbReference>
<dbReference type="PANTHER" id="PTHR12598">
    <property type="entry name" value="COPPER HOMEOSTASIS PROTEIN CUTC"/>
    <property type="match status" value="1"/>
</dbReference>
<dbReference type="PANTHER" id="PTHR12598:SF0">
    <property type="entry name" value="COPPER HOMEOSTASIS PROTEIN CUTC HOMOLOG"/>
    <property type="match status" value="1"/>
</dbReference>
<dbReference type="Pfam" id="PF03932">
    <property type="entry name" value="CutC"/>
    <property type="match status" value="1"/>
</dbReference>
<dbReference type="SUPFAM" id="SSF110395">
    <property type="entry name" value="CutC-like"/>
    <property type="match status" value="1"/>
</dbReference>
<comment type="subcellular location">
    <subcellularLocation>
        <location evidence="1">Cytoplasm</location>
    </subcellularLocation>
</comment>
<comment type="similarity">
    <text evidence="1">Belongs to the CutC family.</text>
</comment>
<comment type="caution">
    <text evidence="1">Once thought to be involved in copper homeostasis, experiments in E.coli have shown this is not the case.</text>
</comment>
<reference key="1">
    <citation type="submission" date="2006-09" db="EMBL/GenBank/DDBJ databases">
        <authorList>
            <consortium name="The Klebsiella pneumonia Genome Sequencing Project"/>
            <person name="McClelland M."/>
            <person name="Sanderson E.K."/>
            <person name="Spieth J."/>
            <person name="Clifton W.S."/>
            <person name="Latreille P."/>
            <person name="Sabo A."/>
            <person name="Pepin K."/>
            <person name="Bhonagiri V."/>
            <person name="Porwollik S."/>
            <person name="Ali J."/>
            <person name="Wilson R.K."/>
        </authorList>
    </citation>
    <scope>NUCLEOTIDE SEQUENCE [LARGE SCALE GENOMIC DNA]</scope>
    <source>
        <strain>ATCC 700721 / MGH 78578</strain>
    </source>
</reference>
<evidence type="ECO:0000255" key="1">
    <source>
        <dbReference type="HAMAP-Rule" id="MF_00795"/>
    </source>
</evidence>